<keyword id="KW-0342">GTP-binding</keyword>
<keyword id="KW-0378">Hydrolase</keyword>
<keyword id="KW-0449">Lipoprotein</keyword>
<keyword id="KW-0460">Magnesium</keyword>
<keyword id="KW-0479">Metal-binding</keyword>
<keyword id="KW-0519">Myristate</keyword>
<keyword id="KW-0547">Nucleotide-binding</keyword>
<keyword id="KW-0564">Palmitate</keyword>
<keyword id="KW-1185">Reference proteome</keyword>
<keyword id="KW-0807">Transducer</keyword>
<organism>
    <name type="scientific">Kluyveromyces lactis (strain ATCC 8585 / CBS 2359 / DSM 70799 / NBRC 1267 / NRRL Y-1140 / WM37)</name>
    <name type="common">Yeast</name>
    <name type="synonym">Candida sphaerica</name>
    <dbReference type="NCBI Taxonomy" id="284590"/>
    <lineage>
        <taxon>Eukaryota</taxon>
        <taxon>Fungi</taxon>
        <taxon>Dikarya</taxon>
        <taxon>Ascomycota</taxon>
        <taxon>Saccharomycotina</taxon>
        <taxon>Saccharomycetes</taxon>
        <taxon>Saccharomycetales</taxon>
        <taxon>Saccharomycetaceae</taxon>
        <taxon>Kluyveromyces</taxon>
    </lineage>
</organism>
<sequence length="554" mass="61459">MGLCASKDSRESTHDGGPRVNRPGANDANRRNDVRKGAGDKKQDKKNKKAKGSIVNAASNINNSSSGKTKISTVSEDGTVSNGVGNTAEYDNANNKNNGNNNNSNNNDNNNNNNNNIGNNINGNNNNDSENIHDSNNSNIENKRYFNNINTGVLNGVNGNSTNSDKALSNQFDQSNNSETHSGTMTGISQALALNDSGVNGFDTDLAKRNGTVNASGGQSPGGSETVNALKVLLLGSGESGKSTVLQQLKILHQNGFSREELLEYKPFIFDNIIETGKDLAKARRTFNVQLEEDAEISESDLDELLSQQYQPTKLPCLPADLAKTLKILWNLQSTQDLLVSEHRSSFYLMDSASYFYENLDRISEPKYIPTITDVIRTRKKTSGIFDTMIDLDKNLKLHFFDVGGQRSERKKWIHCFDNVTLIIFCVSLSEYDQTLLEDNSQNRLEESLILFDSVVNSRWFARSSVVLFLNKIDIFAEKLRHVPLEKYFPDYTGGKDINKAAKYILWRFVQLNRANLNIYPHVTQATDTSNIKLVFAAIKETILENSLKDSGVL</sequence>
<name>GPA2_KLULA</name>
<gene>
    <name type="primary">GPA2</name>
    <name type="ordered locus">KLLA0D10956g</name>
</gene>
<proteinExistence type="inferred from homology"/>
<evidence type="ECO:0000250" key="1">
    <source>
        <dbReference type="UniProtKB" id="P10823"/>
    </source>
</evidence>
<evidence type="ECO:0000250" key="2">
    <source>
        <dbReference type="UniProtKB" id="P18064"/>
    </source>
</evidence>
<evidence type="ECO:0000255" key="3"/>
<evidence type="ECO:0000255" key="4">
    <source>
        <dbReference type="PROSITE-ProRule" id="PRU01230"/>
    </source>
</evidence>
<evidence type="ECO:0000256" key="5">
    <source>
        <dbReference type="SAM" id="MobiDB-lite"/>
    </source>
</evidence>
<evidence type="ECO:0000305" key="6"/>
<accession>P54111</accession>
<accession>Q6CR89</accession>
<feature type="initiator methionine" description="Removed" evidence="3">
    <location>
        <position position="1"/>
    </location>
</feature>
<feature type="chain" id="PRO_0000203603" description="Guanine nucleotide-binding protein alpha-2 subunit">
    <location>
        <begin position="2"/>
        <end position="554"/>
    </location>
</feature>
<feature type="domain" description="G-alpha" evidence="4">
    <location>
        <begin position="228"/>
        <end position="554"/>
    </location>
</feature>
<feature type="region of interest" description="Disordered" evidence="5">
    <location>
        <begin position="1"/>
        <end position="139"/>
    </location>
</feature>
<feature type="region of interest" description="Disordered" evidence="5">
    <location>
        <begin position="157"/>
        <end position="183"/>
    </location>
</feature>
<feature type="region of interest" description="G1 motif" evidence="4">
    <location>
        <begin position="231"/>
        <end position="244"/>
    </location>
</feature>
<feature type="region of interest" description="G2 motif" evidence="4">
    <location>
        <begin position="374"/>
        <end position="382"/>
    </location>
</feature>
<feature type="region of interest" description="G3 motif" evidence="4">
    <location>
        <begin position="398"/>
        <end position="407"/>
    </location>
</feature>
<feature type="region of interest" description="G4 motif" evidence="4">
    <location>
        <begin position="467"/>
        <end position="474"/>
    </location>
</feature>
<feature type="region of interest" description="G5 motif" evidence="4">
    <location>
        <begin position="524"/>
        <end position="529"/>
    </location>
</feature>
<feature type="compositionally biased region" description="Basic and acidic residues" evidence="5">
    <location>
        <begin position="7"/>
        <end position="17"/>
    </location>
</feature>
<feature type="compositionally biased region" description="Basic and acidic residues" evidence="5">
    <location>
        <begin position="28"/>
        <end position="43"/>
    </location>
</feature>
<feature type="compositionally biased region" description="Low complexity" evidence="5">
    <location>
        <begin position="52"/>
        <end position="66"/>
    </location>
</feature>
<feature type="compositionally biased region" description="Polar residues" evidence="5">
    <location>
        <begin position="67"/>
        <end position="85"/>
    </location>
</feature>
<feature type="compositionally biased region" description="Low complexity" evidence="5">
    <location>
        <begin position="91"/>
        <end position="139"/>
    </location>
</feature>
<feature type="binding site" evidence="2">
    <location>
        <position position="239"/>
    </location>
    <ligand>
        <name>GTP</name>
        <dbReference type="ChEBI" id="CHEBI:37565"/>
    </ligand>
</feature>
<feature type="binding site" evidence="2">
    <location>
        <position position="240"/>
    </location>
    <ligand>
        <name>GTP</name>
        <dbReference type="ChEBI" id="CHEBI:37565"/>
    </ligand>
</feature>
<feature type="binding site" evidence="2">
    <location>
        <position position="241"/>
    </location>
    <ligand>
        <name>GTP</name>
        <dbReference type="ChEBI" id="CHEBI:37565"/>
    </ligand>
</feature>
<feature type="binding site" evidence="2">
    <location>
        <position position="242"/>
    </location>
    <ligand>
        <name>GTP</name>
        <dbReference type="ChEBI" id="CHEBI:37565"/>
    </ligand>
</feature>
<feature type="binding site" evidence="2">
    <location>
        <position position="243"/>
    </location>
    <ligand>
        <name>GTP</name>
        <dbReference type="ChEBI" id="CHEBI:37565"/>
    </ligand>
</feature>
<feature type="binding site" evidence="2">
    <location>
        <position position="243"/>
    </location>
    <ligand>
        <name>Mg(2+)</name>
        <dbReference type="ChEBI" id="CHEBI:18420"/>
    </ligand>
</feature>
<feature type="binding site" evidence="2">
    <location>
        <position position="244"/>
    </location>
    <ligand>
        <name>GTP</name>
        <dbReference type="ChEBI" id="CHEBI:37565"/>
    </ligand>
</feature>
<feature type="binding site" evidence="2">
    <location>
        <position position="351"/>
    </location>
    <ligand>
        <name>GTP</name>
        <dbReference type="ChEBI" id="CHEBI:37565"/>
    </ligand>
</feature>
<feature type="binding site" evidence="2">
    <location>
        <position position="376"/>
    </location>
    <ligand>
        <name>GTP</name>
        <dbReference type="ChEBI" id="CHEBI:37565"/>
    </ligand>
</feature>
<feature type="binding site" evidence="2">
    <location>
        <position position="382"/>
    </location>
    <ligand>
        <name>GTP</name>
        <dbReference type="ChEBI" id="CHEBI:37565"/>
    </ligand>
</feature>
<feature type="binding site" evidence="2">
    <location>
        <position position="382"/>
    </location>
    <ligand>
        <name>Mg(2+)</name>
        <dbReference type="ChEBI" id="CHEBI:18420"/>
    </ligand>
</feature>
<feature type="binding site" evidence="2">
    <location>
        <position position="405"/>
    </location>
    <ligand>
        <name>GTP</name>
        <dbReference type="ChEBI" id="CHEBI:37565"/>
    </ligand>
</feature>
<feature type="binding site" evidence="2">
    <location>
        <position position="471"/>
    </location>
    <ligand>
        <name>GTP</name>
        <dbReference type="ChEBI" id="CHEBI:37565"/>
    </ligand>
</feature>
<feature type="binding site" evidence="2">
    <location>
        <position position="472"/>
    </location>
    <ligand>
        <name>GTP</name>
        <dbReference type="ChEBI" id="CHEBI:37565"/>
    </ligand>
</feature>
<feature type="binding site" evidence="2">
    <location>
        <position position="474"/>
    </location>
    <ligand>
        <name>GTP</name>
        <dbReference type="ChEBI" id="CHEBI:37565"/>
    </ligand>
</feature>
<feature type="binding site" evidence="2">
    <location>
        <position position="526"/>
    </location>
    <ligand>
        <name>GTP</name>
        <dbReference type="ChEBI" id="CHEBI:37565"/>
    </ligand>
</feature>
<feature type="lipid moiety-binding region" description="N-myristoyl glycine" evidence="1">
    <location>
        <position position="2"/>
    </location>
</feature>
<feature type="lipid moiety-binding region" description="S-palmitoyl cysteine" evidence="1">
    <location>
        <position position="4"/>
    </location>
</feature>
<comment type="function">
    <text>Guanine nucleotide-binding proteins (G proteins) are involved as modulators or transducers in various transmembrane signaling systems. This protein may be involved in the determination of the cAMP level according to nutritional conditions, most probably as a regulator of adenylyl cyclase.</text>
</comment>
<comment type="cofactor">
    <cofactor evidence="2">
        <name>Mg(2+)</name>
        <dbReference type="ChEBI" id="CHEBI:18420"/>
    </cofactor>
</comment>
<comment type="subunit">
    <text>G proteins are composed of 3 units; alpha, beta and gamma. The alpha chain contains the guanine nucleotide binding site.</text>
</comment>
<comment type="similarity">
    <text evidence="6">Belongs to the G-alpha family.</text>
</comment>
<comment type="sequence caution" evidence="6">
    <conflict type="erroneous initiation">
        <sequence resource="EMBL-CDS" id="AAA75112"/>
    </conflict>
    <text>Truncated N-terminus.</text>
</comment>
<dbReference type="EMBL" id="CR382124">
    <property type="protein sequence ID" value="CAH00646.1"/>
    <property type="molecule type" value="Genomic_DNA"/>
</dbReference>
<dbReference type="EMBL" id="L47105">
    <property type="protein sequence ID" value="AAA75112.1"/>
    <property type="status" value="ALT_INIT"/>
    <property type="molecule type" value="Genomic_DNA"/>
</dbReference>
<dbReference type="PIR" id="S72195">
    <property type="entry name" value="S72195"/>
</dbReference>
<dbReference type="RefSeq" id="XP_453550.1">
    <property type="nucleotide sequence ID" value="XM_453550.1"/>
</dbReference>
<dbReference type="SMR" id="P54111"/>
<dbReference type="FunCoup" id="P54111">
    <property type="interactions" value="389"/>
</dbReference>
<dbReference type="STRING" id="284590.P54111"/>
<dbReference type="PaxDb" id="284590-P54111"/>
<dbReference type="KEGG" id="kla:KLLA0_D10956g"/>
<dbReference type="eggNOG" id="KOG0082">
    <property type="taxonomic scope" value="Eukaryota"/>
</dbReference>
<dbReference type="HOGENOM" id="CLU_014184_0_0_1"/>
<dbReference type="InParanoid" id="P54111"/>
<dbReference type="OMA" id="QVRMIHE"/>
<dbReference type="Proteomes" id="UP000000598">
    <property type="component" value="Chromosome D"/>
</dbReference>
<dbReference type="GO" id="GO:0005737">
    <property type="term" value="C:cytoplasm"/>
    <property type="evidence" value="ECO:0007669"/>
    <property type="project" value="TreeGrafter"/>
</dbReference>
<dbReference type="GO" id="GO:0005834">
    <property type="term" value="C:heterotrimeric G-protein complex"/>
    <property type="evidence" value="ECO:0007669"/>
    <property type="project" value="InterPro"/>
</dbReference>
<dbReference type="GO" id="GO:0001664">
    <property type="term" value="F:G protein-coupled receptor binding"/>
    <property type="evidence" value="ECO:0007669"/>
    <property type="project" value="InterPro"/>
</dbReference>
<dbReference type="GO" id="GO:0031683">
    <property type="term" value="F:G-protein beta/gamma-subunit complex binding"/>
    <property type="evidence" value="ECO:0007669"/>
    <property type="project" value="InterPro"/>
</dbReference>
<dbReference type="GO" id="GO:0005525">
    <property type="term" value="F:GTP binding"/>
    <property type="evidence" value="ECO:0007669"/>
    <property type="project" value="UniProtKB-KW"/>
</dbReference>
<dbReference type="GO" id="GO:0003924">
    <property type="term" value="F:GTPase activity"/>
    <property type="evidence" value="ECO:0007669"/>
    <property type="project" value="InterPro"/>
</dbReference>
<dbReference type="GO" id="GO:0046872">
    <property type="term" value="F:metal ion binding"/>
    <property type="evidence" value="ECO:0007669"/>
    <property type="project" value="UniProtKB-KW"/>
</dbReference>
<dbReference type="GO" id="GO:0007189">
    <property type="term" value="P:adenylate cyclase-activating G protein-coupled receptor signaling pathway"/>
    <property type="evidence" value="ECO:0007669"/>
    <property type="project" value="TreeGrafter"/>
</dbReference>
<dbReference type="CDD" id="cd00066">
    <property type="entry name" value="G-alpha"/>
    <property type="match status" value="1"/>
</dbReference>
<dbReference type="FunFam" id="1.10.400.10:FF:000007">
    <property type="entry name" value="Guanine nucleotide-binding protein subunit alpha"/>
    <property type="match status" value="1"/>
</dbReference>
<dbReference type="FunFam" id="3.40.50.300:FF:000181">
    <property type="entry name" value="Guanine nucleotide-binding protein subunit alpha"/>
    <property type="match status" value="1"/>
</dbReference>
<dbReference type="Gene3D" id="1.10.400.10">
    <property type="entry name" value="GI Alpha 1, domain 2-like"/>
    <property type="match status" value="1"/>
</dbReference>
<dbReference type="Gene3D" id="3.40.50.300">
    <property type="entry name" value="P-loop containing nucleotide triphosphate hydrolases"/>
    <property type="match status" value="1"/>
</dbReference>
<dbReference type="InterPro" id="IPR002975">
    <property type="entry name" value="Fungi_Gprotein_alpha"/>
</dbReference>
<dbReference type="InterPro" id="IPR001019">
    <property type="entry name" value="Gprotein_alpha_su"/>
</dbReference>
<dbReference type="InterPro" id="IPR011025">
    <property type="entry name" value="GproteinA_insert"/>
</dbReference>
<dbReference type="InterPro" id="IPR027417">
    <property type="entry name" value="P-loop_NTPase"/>
</dbReference>
<dbReference type="PANTHER" id="PTHR10218">
    <property type="entry name" value="GTP-BINDING PROTEIN ALPHA SUBUNIT"/>
    <property type="match status" value="1"/>
</dbReference>
<dbReference type="PANTHER" id="PTHR10218:SF369">
    <property type="entry name" value="GUANINE NUCLEOTIDE-BINDING PROTEIN ALPHA-2 SUBUNIT"/>
    <property type="match status" value="1"/>
</dbReference>
<dbReference type="Pfam" id="PF00503">
    <property type="entry name" value="G-alpha"/>
    <property type="match status" value="1"/>
</dbReference>
<dbReference type="PRINTS" id="PR00318">
    <property type="entry name" value="GPROTEINA"/>
</dbReference>
<dbReference type="PRINTS" id="PR01241">
    <property type="entry name" value="GPROTEINAFNG"/>
</dbReference>
<dbReference type="SMART" id="SM00275">
    <property type="entry name" value="G_alpha"/>
    <property type="match status" value="1"/>
</dbReference>
<dbReference type="SUPFAM" id="SSF52540">
    <property type="entry name" value="P-loop containing nucleoside triphosphate hydrolases"/>
    <property type="match status" value="1"/>
</dbReference>
<dbReference type="SUPFAM" id="SSF47895">
    <property type="entry name" value="Transducin (alpha subunit), insertion domain"/>
    <property type="match status" value="1"/>
</dbReference>
<dbReference type="PROSITE" id="PS51882">
    <property type="entry name" value="G_ALPHA"/>
    <property type="match status" value="1"/>
</dbReference>
<reference key="1">
    <citation type="journal article" date="2004" name="Nature">
        <title>Genome evolution in yeasts.</title>
        <authorList>
            <person name="Dujon B."/>
            <person name="Sherman D."/>
            <person name="Fischer G."/>
            <person name="Durrens P."/>
            <person name="Casaregola S."/>
            <person name="Lafontaine I."/>
            <person name="de Montigny J."/>
            <person name="Marck C."/>
            <person name="Neuveglise C."/>
            <person name="Talla E."/>
            <person name="Goffard N."/>
            <person name="Frangeul L."/>
            <person name="Aigle M."/>
            <person name="Anthouard V."/>
            <person name="Babour A."/>
            <person name="Barbe V."/>
            <person name="Barnay S."/>
            <person name="Blanchin S."/>
            <person name="Beckerich J.-M."/>
            <person name="Beyne E."/>
            <person name="Bleykasten C."/>
            <person name="Boisrame A."/>
            <person name="Boyer J."/>
            <person name="Cattolico L."/>
            <person name="Confanioleri F."/>
            <person name="de Daruvar A."/>
            <person name="Despons L."/>
            <person name="Fabre E."/>
            <person name="Fairhead C."/>
            <person name="Ferry-Dumazet H."/>
            <person name="Groppi A."/>
            <person name="Hantraye F."/>
            <person name="Hennequin C."/>
            <person name="Jauniaux N."/>
            <person name="Joyet P."/>
            <person name="Kachouri R."/>
            <person name="Kerrest A."/>
            <person name="Koszul R."/>
            <person name="Lemaire M."/>
            <person name="Lesur I."/>
            <person name="Ma L."/>
            <person name="Muller H."/>
            <person name="Nicaud J.-M."/>
            <person name="Nikolski M."/>
            <person name="Oztas S."/>
            <person name="Ozier-Kalogeropoulos O."/>
            <person name="Pellenz S."/>
            <person name="Potier S."/>
            <person name="Richard G.-F."/>
            <person name="Straub M.-L."/>
            <person name="Suleau A."/>
            <person name="Swennen D."/>
            <person name="Tekaia F."/>
            <person name="Wesolowski-Louvel M."/>
            <person name="Westhof E."/>
            <person name="Wirth B."/>
            <person name="Zeniou-Meyer M."/>
            <person name="Zivanovic Y."/>
            <person name="Bolotin-Fukuhara M."/>
            <person name="Thierry A."/>
            <person name="Bouchier C."/>
            <person name="Caudron B."/>
            <person name="Scarpelli C."/>
            <person name="Gaillardin C."/>
            <person name="Weissenbach J."/>
            <person name="Wincker P."/>
            <person name="Souciet J.-L."/>
        </authorList>
    </citation>
    <scope>NUCLEOTIDE SEQUENCE [LARGE SCALE GENOMIC DNA]</scope>
    <source>
        <strain>ATCC 8585 / CBS 2359 / DSM 70799 / NBRC 1267 / NRRL Y-1140 / WM37</strain>
    </source>
</reference>
<reference key="2">
    <citation type="journal article" date="1996" name="Yeast">
        <title>Isolation of a gene encoding a G protein alpha subunit involved in the regulation of cAMP levels in the yeast Kluyveromyces lactis.</title>
        <authorList>
            <person name="Savinon-Tejeda A."/>
            <person name="Ongay-Larios L."/>
            <person name="Ramirez J."/>
            <person name="Coria R."/>
        </authorList>
    </citation>
    <scope>NUCLEOTIDE SEQUENCE [GENOMIC DNA] OF 12-554</scope>
    <source>
        <strain>CBS 2359 / IFO 1267 / NRRL Y-1140 / WM37</strain>
    </source>
</reference>
<protein>
    <recommendedName>
        <fullName>Guanine nucleotide-binding protein alpha-2 subunit</fullName>
    </recommendedName>
    <alternativeName>
        <fullName>GP2-alpha</fullName>
    </alternativeName>
</protein>